<keyword id="KW-0597">Phosphoprotein</keyword>
<keyword id="KW-1185">Reference proteome</keyword>
<dbReference type="EMBL" id="AB064604">
    <property type="protein sequence ID" value="BAB79344.1"/>
    <property type="molecule type" value="Genomic_DNA"/>
</dbReference>
<dbReference type="Proteomes" id="UP000008260">
    <property type="component" value="Genome"/>
</dbReference>
<dbReference type="InterPro" id="IPR008474">
    <property type="entry name" value="DUF755"/>
</dbReference>
<dbReference type="InterPro" id="IPR004118">
    <property type="entry name" value="HEV_TT_vir_Orf2/Gyrovir_Vp2_N"/>
</dbReference>
<dbReference type="Pfam" id="PF05501">
    <property type="entry name" value="DUF755"/>
    <property type="match status" value="1"/>
</dbReference>
<dbReference type="Pfam" id="PF02957">
    <property type="entry name" value="TT_ORF2-like"/>
    <property type="match status" value="1"/>
</dbReference>
<feature type="chain" id="PRO_0000315339" description="Probable protein VP2">
    <location>
        <begin position="1"/>
        <end position="272"/>
    </location>
</feature>
<feature type="region of interest" description="Disordered" evidence="2">
    <location>
        <begin position="50"/>
        <end position="116"/>
    </location>
</feature>
<feature type="region of interest" description="Disordered" evidence="2">
    <location>
        <begin position="195"/>
        <end position="272"/>
    </location>
</feature>
<feature type="compositionally biased region" description="Pro residues" evidence="2">
    <location>
        <begin position="78"/>
        <end position="90"/>
    </location>
</feature>
<feature type="compositionally biased region" description="Gly residues" evidence="2">
    <location>
        <begin position="94"/>
        <end position="108"/>
    </location>
</feature>
<feature type="compositionally biased region" description="Basic and acidic residues" evidence="2">
    <location>
        <begin position="218"/>
        <end position="230"/>
    </location>
</feature>
<feature type="compositionally biased region" description="Basic residues" evidence="2">
    <location>
        <begin position="231"/>
        <end position="246"/>
    </location>
</feature>
<feature type="compositionally biased region" description="Low complexity" evidence="2">
    <location>
        <begin position="249"/>
        <end position="272"/>
    </location>
</feature>
<accession>Q8V7G4</accession>
<name>ORF23_TTVV7</name>
<proteinExistence type="inferred from homology"/>
<gene>
    <name type="ORF">ORF2/3</name>
</gene>
<organismHost>
    <name type="scientific">Homo sapiens</name>
    <name type="common">Human</name>
    <dbReference type="NCBI Taxonomy" id="9606"/>
</organismHost>
<sequence>MSIWRPPLHNVPGLEHLWYESVHRSHAAVCGCGDPVRHLTALAERYGIPGGSRSSGAPGVGGNHNPPQIRRARHPAAAPDPPAGNQPPALPWHGDGGNESGAGGGESGGPVADFADDGLDDLVAALDEEELLKTPAPSPPLKYPVAVTSLAEYKSSIRKSSDPATVSDPLTSDVTCLAARVLKESQNNKRLLSFYSPAANAPGSTFPSTSRQKKTSISKRDNKENRDRGRAKARAKQKPKKRRRRARSESSSSSSSKSSFNSEEGSSASSSS</sequence>
<evidence type="ECO:0000250" key="1"/>
<evidence type="ECO:0000256" key="2">
    <source>
        <dbReference type="SAM" id="MobiDB-lite"/>
    </source>
</evidence>
<comment type="PTM">
    <text evidence="1">Phosphorylated at C-terminal serines.</text>
</comment>
<organism>
    <name type="scientific">Torque teno virus (isolate Human/China/CT39F/2001)</name>
    <name type="common">TTV</name>
    <dbReference type="NCBI Taxonomy" id="486279"/>
    <lineage>
        <taxon>Viruses</taxon>
        <taxon>Viruses incertae sedis</taxon>
        <taxon>Anelloviridae</taxon>
        <taxon>Torque teno virus</taxon>
    </lineage>
</organism>
<reference key="1">
    <citation type="journal article" date="2002" name="Arch. Virol.">
        <title>Analysis of the entire genomes of thirteen TT virus variants classifiable into the fourth and fifth genetic groups, isolated from viremic infants.</title>
        <authorList>
            <person name="Peng Y.H."/>
            <person name="Nishizawa T."/>
            <person name="Takahashi M."/>
            <person name="Ishikawa T."/>
            <person name="Yoshikawa A."/>
            <person name="Okamoto H."/>
        </authorList>
    </citation>
    <scope>NUCLEOTIDE SEQUENCE [GENOMIC DNA]</scope>
</reference>
<reference key="2">
    <citation type="journal article" date="2007" name="Rev. Med. Virol.">
        <title>Torque teno virus (TTV): current status.</title>
        <authorList>
            <person name="Hino S."/>
            <person name="Miyata H."/>
        </authorList>
    </citation>
    <scope>REVIEW</scope>
</reference>
<protein>
    <recommendedName>
        <fullName>Probable protein VP2</fullName>
    </recommendedName>
    <alternativeName>
        <fullName>ORF2/3 protein</fullName>
    </alternativeName>
</protein>